<feature type="signal peptide" evidence="1">
    <location>
        <begin position="1"/>
        <end position="18"/>
    </location>
</feature>
<feature type="chain" id="PRO_0000008429" description="Endoplasmic oxidoreductin-1">
    <location>
        <begin position="19"/>
        <end position="563"/>
    </location>
</feature>
<feature type="active site" description="Nucleophile" evidence="7">
    <location>
        <position position="352"/>
    </location>
</feature>
<feature type="active site" evidence="7">
    <location>
        <position position="355"/>
    </location>
</feature>
<feature type="binding site" evidence="7">
    <location>
        <position position="187"/>
    </location>
    <ligand>
        <name>FAD</name>
        <dbReference type="ChEBI" id="CHEBI:57692"/>
    </ligand>
</feature>
<feature type="binding site" evidence="7">
    <location>
        <position position="189"/>
    </location>
    <ligand>
        <name>FAD</name>
        <dbReference type="ChEBI" id="CHEBI:57692"/>
    </ligand>
</feature>
<feature type="binding site" evidence="7">
    <location>
        <position position="200"/>
    </location>
    <ligand>
        <name>FAD</name>
        <dbReference type="ChEBI" id="CHEBI:57692"/>
    </ligand>
</feature>
<feature type="binding site" evidence="7">
    <location>
        <position position="228"/>
    </location>
    <ligand>
        <name>FAD</name>
        <dbReference type="ChEBI" id="CHEBI:57692"/>
    </ligand>
</feature>
<feature type="binding site" evidence="7">
    <location>
        <position position="231"/>
    </location>
    <ligand>
        <name>FAD</name>
        <dbReference type="ChEBI" id="CHEBI:57692"/>
    </ligand>
</feature>
<feature type="binding site" evidence="7">
    <location>
        <position position="260"/>
    </location>
    <ligand>
        <name>FAD</name>
        <dbReference type="ChEBI" id="CHEBI:57692"/>
    </ligand>
</feature>
<feature type="glycosylation site" description="N-linked (GlcNAc...) asparagine" evidence="1">
    <location>
        <position position="21"/>
    </location>
</feature>
<feature type="glycosylation site" description="N-linked (GlcNAc...) asparagine" evidence="1">
    <location>
        <position position="35"/>
    </location>
</feature>
<feature type="glycosylation site" description="N-linked (GlcNAc...) asparagine" evidence="1">
    <location>
        <position position="53"/>
    </location>
</feature>
<feature type="glycosylation site" description="N-linked (GlcNAc...) asparagine" evidence="1">
    <location>
        <position position="130"/>
    </location>
</feature>
<feature type="glycosylation site" description="N-linked (GlcNAc...) asparagine" evidence="1">
    <location>
        <position position="342"/>
    </location>
</feature>
<feature type="glycosylation site" description="N-linked (GlcNAc...) asparagine" evidence="1">
    <location>
        <position position="425"/>
    </location>
</feature>
<feature type="glycosylation site" description="N-linked (GlcNAc...) asparagine" evidence="1">
    <location>
        <position position="458"/>
    </location>
</feature>
<feature type="glycosylation site" description="N-linked (GlcNAc...) asparagine" evidence="1">
    <location>
        <position position="468"/>
    </location>
</feature>
<feature type="glycosylation site" description="N-linked (GlcNAc...) asparagine" evidence="1">
    <location>
        <position position="491"/>
    </location>
</feature>
<feature type="disulfide bond" evidence="7 12 13">
    <location>
        <begin position="90"/>
        <end position="349"/>
    </location>
</feature>
<feature type="disulfide bond" description="Redox-active" evidence="7 12 13">
    <location>
        <begin position="100"/>
        <end position="105"/>
    </location>
</feature>
<feature type="disulfide bond" evidence="7 12 13">
    <location>
        <begin position="143"/>
        <end position="166"/>
    </location>
</feature>
<feature type="disulfide bond" evidence="7 12 13">
    <location>
        <begin position="150"/>
        <end position="295"/>
    </location>
</feature>
<feature type="disulfide bond" description="Redox-active" evidence="7 12 13">
    <location>
        <begin position="352"/>
        <end position="355"/>
    </location>
</feature>
<feature type="mutagenesis site" description="No effect." evidence="3 8">
    <original>C</original>
    <variation>A</variation>
    <location>
        <position position="90"/>
    </location>
</feature>
<feature type="mutagenesis site" description="Impairs the capture of mixed-disulfide with PDI1 thereby blocking its function. Loss of activity; when associated with A-105." evidence="3 8">
    <original>C</original>
    <variation>A</variation>
    <location>
        <position position="100"/>
    </location>
</feature>
<feature type="mutagenesis site" description="Loss of activity." evidence="3 8">
    <original>C</original>
    <variation>A</variation>
    <location>
        <position position="105"/>
    </location>
</feature>
<feature type="mutagenesis site" description="No effect; when associated with A-166." evidence="8">
    <original>C</original>
    <variation>A</variation>
    <location>
        <position position="143"/>
    </location>
</feature>
<feature type="mutagenesis site" description="Loss of regulatory disulfide bond and strongly increased activity towards PDI; when associated with A-295." evidence="8">
    <original>C</original>
    <variation>A</variation>
    <location>
        <position position="150"/>
    </location>
</feature>
<feature type="mutagenesis site" description="No effect; when associated with A-143." evidence="8">
    <original>C</original>
    <variation>A</variation>
    <location>
        <position position="166"/>
    </location>
</feature>
<feature type="mutagenesis site" description="No effect." evidence="3">
    <original>C</original>
    <variation>A</variation>
    <location>
        <position position="208"/>
    </location>
</feature>
<feature type="mutagenesis site" description="In ERO1-1; induces defective folding of disulfide proteins." evidence="7">
    <original>G</original>
    <variation>S</variation>
    <location>
        <position position="229"/>
    </location>
</feature>
<feature type="mutagenesis site" description="In ERO1-2; induces defective folding of disulfide proteins." evidence="10">
    <original>H</original>
    <variation>Y</variation>
    <location>
        <position position="231"/>
    </location>
</feature>
<feature type="mutagenesis site" description="Loss of regulatory disulfide bond and strongly increased activity towards PDI; when associated with A-150." evidence="8">
    <original>C</original>
    <variation>A</variation>
    <location>
        <position position="295"/>
    </location>
</feature>
<feature type="mutagenesis site" description="Does not affect activity but increases by twofold the amount of protein found in mixed disulfide with PDI1 or MPD2." evidence="3">
    <original>C</original>
    <variation>A</variation>
    <location>
        <position position="349"/>
    </location>
</feature>
<feature type="mutagenesis site" description="Loss of activity. Prevents its reoxidation thereby blocking its function." evidence="3 8">
    <original>C</original>
    <variation>A</variation>
    <location>
        <position position="352"/>
    </location>
</feature>
<feature type="mutagenesis site" description="Loss of activity. Prevents its reoxidation thereby blocking its function." evidence="3 8">
    <original>C</original>
    <variation>A</variation>
    <location>
        <position position="355"/>
    </location>
</feature>
<feature type="sequence conflict" description="In Ref. 3; AAT93069." evidence="11" ref="3">
    <original>P</original>
    <variation>L</variation>
    <location>
        <position position="555"/>
    </location>
</feature>
<feature type="helix" evidence="16">
    <location>
        <begin position="56"/>
        <end position="73"/>
    </location>
</feature>
<feature type="turn" evidence="16">
    <location>
        <begin position="77"/>
        <end position="79"/>
    </location>
</feature>
<feature type="strand" evidence="16">
    <location>
        <begin position="80"/>
        <end position="86"/>
    </location>
</feature>
<feature type="strand" evidence="16">
    <location>
        <begin position="91"/>
        <end position="93"/>
    </location>
</feature>
<feature type="strand" evidence="14">
    <location>
        <begin position="95"/>
        <end position="98"/>
    </location>
</feature>
<feature type="turn" evidence="16">
    <location>
        <begin position="102"/>
        <end position="105"/>
    </location>
</feature>
<feature type="strand" evidence="17">
    <location>
        <begin position="109"/>
        <end position="111"/>
    </location>
</feature>
<feature type="helix" evidence="14">
    <location>
        <begin position="113"/>
        <end position="115"/>
    </location>
</feature>
<feature type="helix" evidence="16">
    <location>
        <begin position="118"/>
        <end position="120"/>
    </location>
</feature>
<feature type="helix" evidence="16">
    <location>
        <begin position="122"/>
        <end position="125"/>
    </location>
</feature>
<feature type="turn" evidence="16">
    <location>
        <begin position="130"/>
        <end position="132"/>
    </location>
</feature>
<feature type="strand" evidence="15">
    <location>
        <begin position="133"/>
        <end position="135"/>
    </location>
</feature>
<feature type="strand" evidence="15">
    <location>
        <begin position="137"/>
        <end position="139"/>
    </location>
</feature>
<feature type="helix" evidence="16">
    <location>
        <begin position="141"/>
        <end position="143"/>
    </location>
</feature>
<feature type="helix" evidence="16">
    <location>
        <begin position="146"/>
        <end position="149"/>
    </location>
</feature>
<feature type="turn" evidence="14">
    <location>
        <begin position="152"/>
        <end position="154"/>
    </location>
</feature>
<feature type="strand" evidence="14">
    <location>
        <begin position="159"/>
        <end position="161"/>
    </location>
</feature>
<feature type="helix" evidence="16">
    <location>
        <begin position="165"/>
        <end position="168"/>
    </location>
</feature>
<feature type="strand" evidence="16">
    <location>
        <begin position="176"/>
        <end position="180"/>
    </location>
</feature>
<feature type="turn" evidence="16">
    <location>
        <begin position="181"/>
        <end position="183"/>
    </location>
</feature>
<feature type="helix" evidence="16">
    <location>
        <begin position="193"/>
        <end position="205"/>
    </location>
</feature>
<feature type="helix" evidence="16">
    <location>
        <begin position="216"/>
        <end position="240"/>
    </location>
</feature>
<feature type="strand" evidence="16">
    <location>
        <begin position="241"/>
        <end position="243"/>
    </location>
</feature>
<feature type="turn" evidence="16">
    <location>
        <begin position="245"/>
        <end position="247"/>
    </location>
</feature>
<feature type="helix" evidence="16">
    <location>
        <begin position="254"/>
        <end position="260"/>
    </location>
</feature>
<feature type="turn" evidence="16">
    <location>
        <begin position="261"/>
        <end position="263"/>
    </location>
</feature>
<feature type="helix" evidence="16">
    <location>
        <begin position="265"/>
        <end position="285"/>
    </location>
</feature>
<feature type="helix" evidence="16">
    <location>
        <begin position="286"/>
        <end position="288"/>
    </location>
</feature>
<feature type="helix" evidence="16">
    <location>
        <begin position="297"/>
        <end position="311"/>
    </location>
</feature>
<feature type="helix" evidence="16">
    <location>
        <begin position="316"/>
        <end position="319"/>
    </location>
</feature>
<feature type="turn" evidence="16">
    <location>
        <begin position="325"/>
        <end position="327"/>
    </location>
</feature>
<feature type="helix" evidence="16">
    <location>
        <begin position="330"/>
        <end position="346"/>
    </location>
</feature>
<feature type="helix" evidence="16">
    <location>
        <begin position="347"/>
        <end position="349"/>
    </location>
</feature>
<feature type="helix" evidence="16">
    <location>
        <begin position="353"/>
        <end position="376"/>
    </location>
</feature>
<feature type="helix" evidence="16">
    <location>
        <begin position="381"/>
        <end position="389"/>
    </location>
</feature>
<feature type="helix" evidence="16">
    <location>
        <begin position="393"/>
        <end position="424"/>
    </location>
</feature>
<proteinExistence type="evidence at protein level"/>
<reference key="1">
    <citation type="journal article" date="1997" name="Nature">
        <title>The nucleotide sequence of Saccharomyces cerevisiae chromosome XIII.</title>
        <authorList>
            <person name="Bowman S."/>
            <person name="Churcher C.M."/>
            <person name="Badcock K."/>
            <person name="Brown D."/>
            <person name="Chillingworth T."/>
            <person name="Connor R."/>
            <person name="Dedman K."/>
            <person name="Devlin K."/>
            <person name="Gentles S."/>
            <person name="Hamlin N."/>
            <person name="Hunt S."/>
            <person name="Jagels K."/>
            <person name="Lye G."/>
            <person name="Moule S."/>
            <person name="Odell C."/>
            <person name="Pearson D."/>
            <person name="Rajandream M.A."/>
            <person name="Rice P."/>
            <person name="Skelton J."/>
            <person name="Walsh S.V."/>
            <person name="Whitehead S."/>
            <person name="Barrell B.G."/>
        </authorList>
    </citation>
    <scope>NUCLEOTIDE SEQUENCE [LARGE SCALE GENOMIC DNA]</scope>
    <source>
        <strain>ATCC 204508 / S288c</strain>
    </source>
</reference>
<reference key="2">
    <citation type="journal article" date="2014" name="G3 (Bethesda)">
        <title>The reference genome sequence of Saccharomyces cerevisiae: Then and now.</title>
        <authorList>
            <person name="Engel S.R."/>
            <person name="Dietrich F.S."/>
            <person name="Fisk D.G."/>
            <person name="Binkley G."/>
            <person name="Balakrishnan R."/>
            <person name="Costanzo M.C."/>
            <person name="Dwight S.S."/>
            <person name="Hitz B.C."/>
            <person name="Karra K."/>
            <person name="Nash R.S."/>
            <person name="Weng S."/>
            <person name="Wong E.D."/>
            <person name="Lloyd P."/>
            <person name="Skrzypek M.S."/>
            <person name="Miyasato S.R."/>
            <person name="Simison M."/>
            <person name="Cherry J.M."/>
        </authorList>
    </citation>
    <scope>GENOME REANNOTATION</scope>
    <source>
        <strain>ATCC 204508 / S288c</strain>
    </source>
</reference>
<reference key="3">
    <citation type="journal article" date="2007" name="Genome Res.">
        <title>Approaching a complete repository of sequence-verified protein-encoding clones for Saccharomyces cerevisiae.</title>
        <authorList>
            <person name="Hu Y."/>
            <person name="Rolfs A."/>
            <person name="Bhullar B."/>
            <person name="Murthy T.V.S."/>
            <person name="Zhu C."/>
            <person name="Berger M.F."/>
            <person name="Camargo A.A."/>
            <person name="Kelley F."/>
            <person name="McCarron S."/>
            <person name="Jepson D."/>
            <person name="Richardson A."/>
            <person name="Raphael J."/>
            <person name="Moreira D."/>
            <person name="Taycher E."/>
            <person name="Zuo D."/>
            <person name="Mohr S."/>
            <person name="Kane M.F."/>
            <person name="Williamson J."/>
            <person name="Simpson A.J.G."/>
            <person name="Bulyk M.L."/>
            <person name="Harlow E."/>
            <person name="Marsischky G."/>
            <person name="Kolodner R.D."/>
            <person name="LaBaer J."/>
        </authorList>
    </citation>
    <scope>NUCLEOTIDE SEQUENCE [GENOMIC DNA]</scope>
    <source>
        <strain>ATCC 204508 / S288c</strain>
    </source>
</reference>
<reference key="4">
    <citation type="journal article" date="1998" name="Mol. Cell">
        <title>The ERO1 gene of yeast is required for oxidation of protein dithiols in the endoplasmic reticulum.</title>
        <authorList>
            <person name="Frand A.R."/>
            <person name="Kaiser C.A."/>
        </authorList>
    </citation>
    <scope>FUNCTION</scope>
    <scope>SUBCELLULAR LOCATION</scope>
    <scope>GLYCOSYLATION</scope>
    <scope>INDUCTION</scope>
</reference>
<reference key="5">
    <citation type="journal article" date="1998" name="Mol. Cell">
        <title>Ero1p: a novel and ubiquitous protein with an essential role in oxidative protein folding in the endoplasmic reticulum.</title>
        <authorList>
            <person name="Pollard M.G."/>
            <person name="Travers K.J."/>
            <person name="Weissman J.S."/>
        </authorList>
    </citation>
    <scope>FUNCTION</scope>
    <scope>SUBCELLULAR LOCATION</scope>
    <scope>GLYCOSYLATION</scope>
    <scope>INDUCTION</scope>
    <scope>MUTAGENESIS OF HIS-231</scope>
</reference>
<reference key="6">
    <citation type="journal article" date="1999" name="Mol. Cell">
        <title>Ero1p oxidizes protein disulfide isomerase in a pathway for disulfide bond formation in the endoplasmic reticulum.</title>
        <authorList>
            <person name="Frand A.R."/>
            <person name="Kaiser C.A."/>
        </authorList>
    </citation>
    <scope>FUNCTION</scope>
</reference>
<reference key="7">
    <citation type="journal article" date="2000" name="Science">
        <title>Biochemical basis of oxidative protein folding in the endoplasmic reticulum.</title>
        <authorList>
            <person name="Tu B.P."/>
            <person name="Ho-Schleyer S.C."/>
            <person name="Travers K.J."/>
            <person name="Weissman J.S."/>
        </authorList>
    </citation>
    <scope>FUNCTION</scope>
    <scope>COFACTOR</scope>
</reference>
<reference key="8">
    <citation type="journal article" date="2000" name="Mol. Biol. Cell">
        <title>Two pairs of conserved cysteines are required for the oxidative activity of Ero1p in protein disulfide bond formation in the endoplasmic reticulum.</title>
        <authorList>
            <person name="Frand A.R."/>
            <person name="Kaiser C.A."/>
        </authorList>
    </citation>
    <scope>MUTAGENESIS OF CYS-90; CYS-100; CYS-105; CYS-208; CYS-349; CYS-352 AND CYS-355</scope>
</reference>
<reference key="9">
    <citation type="journal article" date="2001" name="FEBS Lett.">
        <title>The C-terminal domain of yeast Ero1p mediates membrane localization and is essential for function.</title>
        <authorList>
            <person name="Pagani M."/>
            <person name="Pilati S."/>
            <person name="Bertoli G."/>
            <person name="Valsasina B."/>
            <person name="Sitia R."/>
        </authorList>
    </citation>
    <scope>SUBCELLULAR LOCATION</scope>
    <scope>DOMAIN</scope>
</reference>
<reference key="10">
    <citation type="journal article" date="2002" name="Mol. Cell">
        <title>The FAD- and O(2)-dependent reaction cycle of Ero1-mediated oxidative protein folding in the endoplasmic reticulum.</title>
        <authorList>
            <person name="Tu B.P."/>
            <person name="Weissman J.S."/>
        </authorList>
    </citation>
    <scope>FUNCTION</scope>
</reference>
<reference key="11">
    <citation type="journal article" date="2004" name="J. Cell Biol.">
        <title>Oxidative protein folding in eukaryotes: mechanisms and consequences.</title>
        <authorList>
            <person name="Tu B.P."/>
            <person name="Weissman J.S."/>
        </authorList>
    </citation>
    <scope>REVIEW</scope>
</reference>
<reference key="12">
    <citation type="journal article" date="2007" name="Cell">
        <title>Modulation of cellular disulfide-bond formation and the ER redox environment by feedback regulation of Ero1.</title>
        <authorList>
            <person name="Sevier C.S."/>
            <person name="Qu H."/>
            <person name="Heldman N."/>
            <person name="Gross E."/>
            <person name="Fass D."/>
            <person name="Kaiser C.A."/>
        </authorList>
    </citation>
    <scope>ACTIVITY REGULATION</scope>
    <scope>DISULFIDE BONDS</scope>
    <scope>MUTAGENESIS OF CYS-90; CYS-100; CYS-105; CYS-143; CYS-150; CYS-166; CYS-295; CYS-352 AND CYS-355</scope>
</reference>
<reference key="13">
    <citation type="journal article" date="2004" name="Cell">
        <title>Structure of Ero1p, source of disulfide bonds for oxidative protein folding in the cell.</title>
        <authorList>
            <person name="Gross E."/>
            <person name="Kastner D.B."/>
            <person name="Kaiser C.A."/>
            <person name="Fass D."/>
        </authorList>
    </citation>
    <scope>X-RAY CRYSTALLOGRAPHY (2.2 ANGSTROMS) OF 56-424 IN COMPLEX WITH FAD</scope>
    <scope>POTENTIAL HOMODIMERIZATION</scope>
    <scope>DISULFIDE BONDS</scope>
    <scope>MUTAGENESIS OF GLY-229</scope>
    <scope>ACTIVE SITE</scope>
</reference>
<dbReference type="EC" id="1.8.4.-"/>
<dbReference type="EMBL" id="Z50178">
    <property type="protein sequence ID" value="CAA90553.1"/>
    <property type="molecule type" value="Genomic_DNA"/>
</dbReference>
<dbReference type="EMBL" id="AY693050">
    <property type="protein sequence ID" value="AAT93069.1"/>
    <property type="molecule type" value="Genomic_DNA"/>
</dbReference>
<dbReference type="EMBL" id="BK006946">
    <property type="protein sequence ID" value="DAA09769.1"/>
    <property type="molecule type" value="Genomic_DNA"/>
</dbReference>
<dbReference type="PIR" id="S58198">
    <property type="entry name" value="S58198"/>
</dbReference>
<dbReference type="RefSeq" id="NP_013576.1">
    <property type="nucleotide sequence ID" value="NM_001182493.1"/>
</dbReference>
<dbReference type="PDB" id="1RP4">
    <property type="method" value="X-ray"/>
    <property type="resolution" value="2.20 A"/>
    <property type="chains" value="A=56-424"/>
</dbReference>
<dbReference type="PDB" id="1RQ1">
    <property type="method" value="X-ray"/>
    <property type="resolution" value="2.80 A"/>
    <property type="chains" value="A=56-424"/>
</dbReference>
<dbReference type="PDB" id="3M31">
    <property type="method" value="X-ray"/>
    <property type="resolution" value="1.85 A"/>
    <property type="chains" value="A=56-424"/>
</dbReference>
<dbReference type="PDB" id="3NVJ">
    <property type="method" value="X-ray"/>
    <property type="resolution" value="3.20 A"/>
    <property type="chains" value="A=56-424"/>
</dbReference>
<dbReference type="PDBsum" id="1RP4"/>
<dbReference type="PDBsum" id="1RQ1"/>
<dbReference type="PDBsum" id="3M31"/>
<dbReference type="PDBsum" id="3NVJ"/>
<dbReference type="SMR" id="Q03103"/>
<dbReference type="BioGRID" id="35075">
    <property type="interactions" value="361"/>
</dbReference>
<dbReference type="DIP" id="DIP-4515N"/>
<dbReference type="FunCoup" id="Q03103">
    <property type="interactions" value="970"/>
</dbReference>
<dbReference type="IntAct" id="Q03103">
    <property type="interactions" value="12"/>
</dbReference>
<dbReference type="STRING" id="4932.YML130C"/>
<dbReference type="GlyCosmos" id="Q03103">
    <property type="glycosylation" value="9 sites, No reported glycans"/>
</dbReference>
<dbReference type="GlyGen" id="Q03103">
    <property type="glycosylation" value="9 sites"/>
</dbReference>
<dbReference type="iPTMnet" id="Q03103"/>
<dbReference type="PaxDb" id="4932-YML130C"/>
<dbReference type="PeptideAtlas" id="Q03103"/>
<dbReference type="EnsemblFungi" id="YML130C_mRNA">
    <property type="protein sequence ID" value="YML130C"/>
    <property type="gene ID" value="YML130C"/>
</dbReference>
<dbReference type="GeneID" id="854909"/>
<dbReference type="KEGG" id="sce:YML130C"/>
<dbReference type="AGR" id="SGD:S000004599"/>
<dbReference type="SGD" id="S000004599">
    <property type="gene designation" value="ERO1"/>
</dbReference>
<dbReference type="VEuPathDB" id="FungiDB:YML130C"/>
<dbReference type="eggNOG" id="KOG2608">
    <property type="taxonomic scope" value="Eukaryota"/>
</dbReference>
<dbReference type="GeneTree" id="ENSGT00390000007753"/>
<dbReference type="HOGENOM" id="CLU_023061_1_0_1"/>
<dbReference type="InParanoid" id="Q03103"/>
<dbReference type="OMA" id="CYKDRLH"/>
<dbReference type="OrthoDB" id="269384at2759"/>
<dbReference type="BioCyc" id="MetaCyc:G3O-32708-MONOMER"/>
<dbReference type="BioCyc" id="YEAST:G3O-32708-MONOMER"/>
<dbReference type="BioGRID-ORCS" id="854909">
    <property type="hits" value="8 hits in 10 CRISPR screens"/>
</dbReference>
<dbReference type="EvolutionaryTrace" id="Q03103"/>
<dbReference type="PRO" id="PR:Q03103"/>
<dbReference type="Proteomes" id="UP000002311">
    <property type="component" value="Chromosome XIII"/>
</dbReference>
<dbReference type="RNAct" id="Q03103">
    <property type="molecule type" value="protein"/>
</dbReference>
<dbReference type="GO" id="GO:0005783">
    <property type="term" value="C:endoplasmic reticulum"/>
    <property type="evidence" value="ECO:0000314"/>
    <property type="project" value="SGD"/>
</dbReference>
<dbReference type="GO" id="GO:0005789">
    <property type="term" value="C:endoplasmic reticulum membrane"/>
    <property type="evidence" value="ECO:0000318"/>
    <property type="project" value="GO_Central"/>
</dbReference>
<dbReference type="GO" id="GO:0071949">
    <property type="term" value="F:FAD binding"/>
    <property type="evidence" value="ECO:0007669"/>
    <property type="project" value="InterPro"/>
</dbReference>
<dbReference type="GO" id="GO:0015035">
    <property type="term" value="F:protein-disulfide reductase activity"/>
    <property type="evidence" value="ECO:0000318"/>
    <property type="project" value="GO_Central"/>
</dbReference>
<dbReference type="GO" id="GO:0016972">
    <property type="term" value="F:thiol oxidase activity"/>
    <property type="evidence" value="ECO:0000314"/>
    <property type="project" value="SGD"/>
</dbReference>
<dbReference type="GO" id="GO:0034975">
    <property type="term" value="P:protein folding in endoplasmic reticulum"/>
    <property type="evidence" value="ECO:0000315"/>
    <property type="project" value="SGD"/>
</dbReference>
<dbReference type="InterPro" id="IPR007266">
    <property type="entry name" value="Ero1"/>
</dbReference>
<dbReference type="InterPro" id="IPR037192">
    <property type="entry name" value="ERO1-like_sf"/>
</dbReference>
<dbReference type="PANTHER" id="PTHR12613:SF0">
    <property type="entry name" value="ERO1-LIKE PROTEIN"/>
    <property type="match status" value="1"/>
</dbReference>
<dbReference type="PANTHER" id="PTHR12613">
    <property type="entry name" value="ERO1-RELATED"/>
    <property type="match status" value="1"/>
</dbReference>
<dbReference type="Pfam" id="PF04137">
    <property type="entry name" value="ERO1"/>
    <property type="match status" value="1"/>
</dbReference>
<dbReference type="PIRSF" id="PIRSF017205">
    <property type="entry name" value="ERO1"/>
    <property type="match status" value="1"/>
</dbReference>
<dbReference type="SUPFAM" id="SSF110019">
    <property type="entry name" value="ERO1-like"/>
    <property type="match status" value="1"/>
</dbReference>
<evidence type="ECO:0000255" key="1"/>
<evidence type="ECO:0000269" key="2">
    <source>
    </source>
</evidence>
<evidence type="ECO:0000269" key="3">
    <source>
    </source>
</evidence>
<evidence type="ECO:0000269" key="4">
    <source>
    </source>
</evidence>
<evidence type="ECO:0000269" key="5">
    <source>
    </source>
</evidence>
<evidence type="ECO:0000269" key="6">
    <source>
    </source>
</evidence>
<evidence type="ECO:0000269" key="7">
    <source>
    </source>
</evidence>
<evidence type="ECO:0000269" key="8">
    <source>
    </source>
</evidence>
<evidence type="ECO:0000269" key="9">
    <source>
    </source>
</evidence>
<evidence type="ECO:0000269" key="10">
    <source>
    </source>
</evidence>
<evidence type="ECO:0000305" key="11"/>
<evidence type="ECO:0007744" key="12">
    <source>
        <dbReference type="PDB" id="1RP4"/>
    </source>
</evidence>
<evidence type="ECO:0007744" key="13">
    <source>
        <dbReference type="PDB" id="1RQ1"/>
    </source>
</evidence>
<evidence type="ECO:0007829" key="14">
    <source>
        <dbReference type="PDB" id="1RP4"/>
    </source>
</evidence>
<evidence type="ECO:0007829" key="15">
    <source>
        <dbReference type="PDB" id="1RQ1"/>
    </source>
</evidence>
<evidence type="ECO:0007829" key="16">
    <source>
        <dbReference type="PDB" id="3M31"/>
    </source>
</evidence>
<evidence type="ECO:0007829" key="17">
    <source>
        <dbReference type="PDB" id="3NVJ"/>
    </source>
</evidence>
<comment type="function">
    <text evidence="2 4 6 9 10">Essential oxidoreductase that oxidizes proteins in the endoplasmic reticulum to produce disulfide bonds. Acts by oxidizing directly PDI1 isomerase through a direct disulfide exchange. Does not act as a direct oxidant of folding substrate, but relies on PDI1 to transfer oxidizing equivalent. Also able to oxidize directly the PDI related protein MPD2. Does not oxidize all PDI related proteins, suggesting that it can discriminate between PDI1 and related proteins. Reoxidation of ERO1 probably involves electron transfer to molecular oxygen via FAD. Acts independently of glutathione. May be responsible for a significant proportion of reactive oxygen species (ROS) in the cell, thereby being a source of oxidative stress.</text>
</comment>
<comment type="cofactor">
    <cofactor evidence="4">
        <name>FAD</name>
        <dbReference type="ChEBI" id="CHEBI:57692"/>
    </cofactor>
</comment>
<comment type="activity regulation">
    <text evidence="8">Enzyme activity is tightly regulated to prevent the accumulation of reactive oxygen species in the endoplasmic reticulum. Reversibly down-regulated by the formation of disulfide bonds between Cys-150 and Cys-295.</text>
</comment>
<comment type="subunit">
    <text evidence="7">May function both as a monomer and a homodimer.</text>
</comment>
<comment type="subcellular location">
    <subcellularLocation>
        <location evidence="5 9 10">Endoplasmic reticulum membrane</location>
        <topology evidence="5 9 10">Peripheral membrane protein</topology>
        <orientation evidence="5 9 10">Lumenal side</orientation>
    </subcellularLocation>
</comment>
<comment type="induction">
    <text evidence="9 10">By unfolded protein response (UPR).</text>
</comment>
<comment type="domain">
    <text evidence="5">The C-terminal part (437-563) is required for the association with the endoplasmic reticulum lumen membrane.</text>
</comment>
<comment type="PTM">
    <text>The Cys-100/Cys-105 and Cys-352/Cys-355 disulfide bonds constitute the redox-active center. The Cys-100/Cys-105 disulfide bond may accept electron from PDI1 and funnel them to the active site disulfide Cys-352/Cys-355.</text>
</comment>
<comment type="PTM">
    <text evidence="9 10">N-glycosylated.</text>
</comment>
<comment type="similarity">
    <text evidence="11">Belongs to the EROs family.</text>
</comment>
<accession>Q03103</accession>
<accession>D6W0F5</accession>
<accession>E9P913</accession>
<name>ERO1_YEAST</name>
<protein>
    <recommendedName>
        <fullName>Endoplasmic oxidoreductin-1</fullName>
        <ecNumber>1.8.4.-</ecNumber>
    </recommendedName>
    <alternativeName>
        <fullName>Endoplasmic reticulum oxidoreductase protein 1</fullName>
    </alternativeName>
</protein>
<sequence length="563" mass="65033">MRLRTAIATLCLTAFTSATSNNSYIATDQTQNAFNDTHFCKVDRNDHVSPSCNVTFNELNAINENIRDDLSALLKSDFFKYFRLDLYKQCSFWDANDGLCLNRACSVDVVEDWDTLPEYWQPEILGSFNNDTMKEADDSDDECKFLDQLCQTSKKPVDIEDTINYCDVNDFNGKNAVLIDLTANPERFTGYGGKQAGQIWSTIYQDNCFTIGETGESLAKDAFYRLVSGFHASIGTHLSKEYLNTKTGKWEPNLDLFMARIGNFPDRVTNMYFNYAVVAKALWKIQPYLPEFSFCDLVNKEIKNKMDNVISQLDTKIFNEDLVFANDLSLTLKDEFRSRFKNVTKIMDCVQCDRCRLWGKIQTTGYATALKILFEINDADEFTKQHIVGKLTKYELIALLQTFGRLSESIESVNMFEKMYGKRLNGSENRLSSFFQNNFFNILKEAGKSIRYTIENINSTKEGKKKTNNSQSHVFDDLKMPKAEIVPRPSNGTVNKWKKAWNTEVNNVLEAFRFIYRSYLDLPRNIWELSLMKVYKFWNKFIGVADYVSEETREPISYKLDIQ</sequence>
<organism>
    <name type="scientific">Saccharomyces cerevisiae (strain ATCC 204508 / S288c)</name>
    <name type="common">Baker's yeast</name>
    <dbReference type="NCBI Taxonomy" id="559292"/>
    <lineage>
        <taxon>Eukaryota</taxon>
        <taxon>Fungi</taxon>
        <taxon>Dikarya</taxon>
        <taxon>Ascomycota</taxon>
        <taxon>Saccharomycotina</taxon>
        <taxon>Saccharomycetes</taxon>
        <taxon>Saccharomycetales</taxon>
        <taxon>Saccharomycetaceae</taxon>
        <taxon>Saccharomyces</taxon>
    </lineage>
</organism>
<keyword id="KW-0002">3D-structure</keyword>
<keyword id="KW-1015">Disulfide bond</keyword>
<keyword id="KW-0249">Electron transport</keyword>
<keyword id="KW-0256">Endoplasmic reticulum</keyword>
<keyword id="KW-0274">FAD</keyword>
<keyword id="KW-0285">Flavoprotein</keyword>
<keyword id="KW-0325">Glycoprotein</keyword>
<keyword id="KW-0472">Membrane</keyword>
<keyword id="KW-0560">Oxidoreductase</keyword>
<keyword id="KW-0676">Redox-active center</keyword>
<keyword id="KW-1185">Reference proteome</keyword>
<keyword id="KW-0732">Signal</keyword>
<keyword id="KW-0813">Transport</keyword>
<gene>
    <name type="primary">ERO1</name>
    <name type="ordered locus">YML130C</name>
    <name type="ORF">YM4987.05C</name>
</gene>